<organism>
    <name type="scientific">Bacillus velezensis (strain DSM 23117 / BGSC 10A6 / LMG 26770 / FZB42)</name>
    <name type="common">Bacillus amyloliquefaciens subsp. plantarum</name>
    <dbReference type="NCBI Taxonomy" id="326423"/>
    <lineage>
        <taxon>Bacteria</taxon>
        <taxon>Bacillati</taxon>
        <taxon>Bacillota</taxon>
        <taxon>Bacilli</taxon>
        <taxon>Bacillales</taxon>
        <taxon>Bacillaceae</taxon>
        <taxon>Bacillus</taxon>
        <taxon>Bacillus amyloliquefaciens group</taxon>
    </lineage>
</organism>
<sequence>MKDPRDVLKRPVITERSADLMTEKKYTFEVDVRANKTEVKDAVESIFGVKVDKVNIMNYKGKSKRVGRYTGMTSRRRKAIVKLTADSKEIEIFEA</sequence>
<proteinExistence type="inferred from homology"/>
<accession>A7Z0P0</accession>
<gene>
    <name evidence="1" type="primary">rplW</name>
    <name type="ordered locus">RBAM_001430</name>
</gene>
<feature type="chain" id="PRO_1000068039" description="Large ribosomal subunit protein uL23">
    <location>
        <begin position="1"/>
        <end position="95"/>
    </location>
</feature>
<keyword id="KW-0687">Ribonucleoprotein</keyword>
<keyword id="KW-0689">Ribosomal protein</keyword>
<keyword id="KW-0694">RNA-binding</keyword>
<keyword id="KW-0699">rRNA-binding</keyword>
<comment type="function">
    <text evidence="1">One of the early assembly proteins it binds 23S rRNA. One of the proteins that surrounds the polypeptide exit tunnel on the outside of the ribosome. Forms the main docking site for trigger factor binding to the ribosome.</text>
</comment>
<comment type="subunit">
    <text evidence="1">Part of the 50S ribosomal subunit. Contacts protein L29, and trigger factor when it is bound to the ribosome.</text>
</comment>
<comment type="similarity">
    <text evidence="1">Belongs to the universal ribosomal protein uL23 family.</text>
</comment>
<protein>
    <recommendedName>
        <fullName evidence="1">Large ribosomal subunit protein uL23</fullName>
    </recommendedName>
    <alternativeName>
        <fullName evidence="2">50S ribosomal protein L23</fullName>
    </alternativeName>
</protein>
<reference key="1">
    <citation type="journal article" date="2007" name="Nat. Biotechnol.">
        <title>Comparative analysis of the complete genome sequence of the plant growth-promoting bacterium Bacillus amyloliquefaciens FZB42.</title>
        <authorList>
            <person name="Chen X.H."/>
            <person name="Koumoutsi A."/>
            <person name="Scholz R."/>
            <person name="Eisenreich A."/>
            <person name="Schneider K."/>
            <person name="Heinemeyer I."/>
            <person name="Morgenstern B."/>
            <person name="Voss B."/>
            <person name="Hess W.R."/>
            <person name="Reva O."/>
            <person name="Junge H."/>
            <person name="Voigt B."/>
            <person name="Jungblut P.R."/>
            <person name="Vater J."/>
            <person name="Suessmuth R."/>
            <person name="Liesegang H."/>
            <person name="Strittmatter A."/>
            <person name="Gottschalk G."/>
            <person name="Borriss R."/>
        </authorList>
    </citation>
    <scope>NUCLEOTIDE SEQUENCE [LARGE SCALE GENOMIC DNA]</scope>
    <source>
        <strain>DSM 23117 / BGSC 10A6 / LMG 26770 / FZB42</strain>
    </source>
</reference>
<evidence type="ECO:0000255" key="1">
    <source>
        <dbReference type="HAMAP-Rule" id="MF_01369"/>
    </source>
</evidence>
<evidence type="ECO:0000305" key="2"/>
<name>RL23_BACVZ</name>
<dbReference type="EMBL" id="CP000560">
    <property type="protein sequence ID" value="ABS72566.1"/>
    <property type="molecule type" value="Genomic_DNA"/>
</dbReference>
<dbReference type="RefSeq" id="WP_003156467.1">
    <property type="nucleotide sequence ID" value="NC_009725.2"/>
</dbReference>
<dbReference type="SMR" id="A7Z0P0"/>
<dbReference type="GeneID" id="93079282"/>
<dbReference type="KEGG" id="bay:RBAM_001430"/>
<dbReference type="HOGENOM" id="CLU_037562_3_2_9"/>
<dbReference type="Proteomes" id="UP000001120">
    <property type="component" value="Chromosome"/>
</dbReference>
<dbReference type="GO" id="GO:1990904">
    <property type="term" value="C:ribonucleoprotein complex"/>
    <property type="evidence" value="ECO:0007669"/>
    <property type="project" value="UniProtKB-KW"/>
</dbReference>
<dbReference type="GO" id="GO:0005840">
    <property type="term" value="C:ribosome"/>
    <property type="evidence" value="ECO:0007669"/>
    <property type="project" value="UniProtKB-KW"/>
</dbReference>
<dbReference type="GO" id="GO:0019843">
    <property type="term" value="F:rRNA binding"/>
    <property type="evidence" value="ECO:0007669"/>
    <property type="project" value="UniProtKB-UniRule"/>
</dbReference>
<dbReference type="GO" id="GO:0003735">
    <property type="term" value="F:structural constituent of ribosome"/>
    <property type="evidence" value="ECO:0007669"/>
    <property type="project" value="InterPro"/>
</dbReference>
<dbReference type="GO" id="GO:0006412">
    <property type="term" value="P:translation"/>
    <property type="evidence" value="ECO:0007669"/>
    <property type="project" value="UniProtKB-UniRule"/>
</dbReference>
<dbReference type="FunFam" id="3.30.70.330:FF:000001">
    <property type="entry name" value="50S ribosomal protein L23"/>
    <property type="match status" value="1"/>
</dbReference>
<dbReference type="Gene3D" id="3.30.70.330">
    <property type="match status" value="1"/>
</dbReference>
<dbReference type="HAMAP" id="MF_01369_B">
    <property type="entry name" value="Ribosomal_uL23_B"/>
    <property type="match status" value="1"/>
</dbReference>
<dbReference type="InterPro" id="IPR012677">
    <property type="entry name" value="Nucleotide-bd_a/b_plait_sf"/>
</dbReference>
<dbReference type="InterPro" id="IPR013025">
    <property type="entry name" value="Ribosomal_uL23-like"/>
</dbReference>
<dbReference type="InterPro" id="IPR012678">
    <property type="entry name" value="Ribosomal_uL23/eL15/eS24_sf"/>
</dbReference>
<dbReference type="InterPro" id="IPR001014">
    <property type="entry name" value="Ribosomal_uL23_CS"/>
</dbReference>
<dbReference type="NCBIfam" id="NF004363">
    <property type="entry name" value="PRK05738.2-4"/>
    <property type="match status" value="1"/>
</dbReference>
<dbReference type="PANTHER" id="PTHR11620">
    <property type="entry name" value="60S RIBOSOMAL PROTEIN L23A"/>
    <property type="match status" value="1"/>
</dbReference>
<dbReference type="Pfam" id="PF00276">
    <property type="entry name" value="Ribosomal_L23"/>
    <property type="match status" value="1"/>
</dbReference>
<dbReference type="SUPFAM" id="SSF54189">
    <property type="entry name" value="Ribosomal proteins S24e, L23 and L15e"/>
    <property type="match status" value="1"/>
</dbReference>
<dbReference type="PROSITE" id="PS00050">
    <property type="entry name" value="RIBOSOMAL_L23"/>
    <property type="match status" value="1"/>
</dbReference>